<geneLocation type="chloroplast"/>
<gene>
    <name evidence="1" type="primary">rbcL</name>
</gene>
<proteinExistence type="inferred from homology"/>
<reference key="1">
    <citation type="journal article" date="1986" name="Gene">
        <title>Complete nucleotide sequence and mRNA-mapping of the large subunit gene of ribulose-1,5-bisphosphate carboxylase/oxygenase (RuBisCO) from Chlamydomonas moewusii.</title>
        <authorList>
            <person name="Yang R.C.A."/>
            <person name="Dove M."/>
            <person name="Seligy V.L."/>
            <person name="Lemieux C."/>
            <person name="Turmel M."/>
            <person name="Narang S.A."/>
        </authorList>
    </citation>
    <scope>NUCLEOTIDE SEQUENCE [GENOMIC DNA]</scope>
</reference>
<organism>
    <name type="scientific">Chlamydomonas moewusii</name>
    <name type="common">Chlamydomonas eugametos</name>
    <dbReference type="NCBI Taxonomy" id="3054"/>
    <lineage>
        <taxon>Eukaryota</taxon>
        <taxon>Viridiplantae</taxon>
        <taxon>Chlorophyta</taxon>
        <taxon>core chlorophytes</taxon>
        <taxon>Chlorophyceae</taxon>
        <taxon>CS clade</taxon>
        <taxon>Chlamydomonadales</taxon>
        <taxon>Chlamydomonadaceae</taxon>
        <taxon>Chlamydomonas</taxon>
    </lineage>
</organism>
<accession>P08211</accession>
<protein>
    <recommendedName>
        <fullName evidence="1">Ribulose bisphosphate carboxylase large chain</fullName>
        <shortName evidence="1">RuBisCO large subunit</shortName>
        <ecNumber evidence="1">4.1.1.39</ecNumber>
    </recommendedName>
</protein>
<sequence length="475" mass="52454">MVPQTETKAGAGFKAGVKDYRLTYYTPDYVVKDTDILAAFRMTPQPGVPAEECGAAVAAESSTGTWTTVWTDGLTSLDRYKGRCYDIEPVPGEDNQYIAYVAYPIDLFEEGSVTNLFTSIVGNVFGFKALRALRLEDLRIPPAYVKTFSGPPHGIQVERDKINKYGRGLLGCTIKPKLGLSAKNYGRAVYECLRGGLDFTKDDENVNSQPFMRWRDRFLFCAEAIYKAQAETGEVKGHYLNATAGTSEEMIKRAVCAKEFGVPIIMHDYLTGGFTANTSLSNYCRDHGLLLHIHRAMHAVIDRQRNHGIHFRVLAKALRMSGGDHLHSGTVVGKLEGEREVTLGFVDLMRDNYIEKDRSRGIYFTQDWCSMAGVMPVASGGIHVWHMPALVEIFGDDACLQFGGGTLGHPWGNAPGAVANRVALEACTQARNEGRDLAREGGDVIRSACKWSPELAAACEVWKEIKVEFDTIDKL</sequence>
<evidence type="ECO:0000255" key="1">
    <source>
        <dbReference type="HAMAP-Rule" id="MF_01338"/>
    </source>
</evidence>
<feature type="propeptide" id="PRO_0000031173" evidence="1">
    <location>
        <begin position="1"/>
        <end position="2"/>
    </location>
</feature>
<feature type="chain" id="PRO_0000031174" description="Ribulose bisphosphate carboxylase large chain">
    <location>
        <begin position="3"/>
        <end position="475"/>
    </location>
</feature>
<feature type="active site" description="Proton acceptor" evidence="1">
    <location>
        <position position="175"/>
    </location>
</feature>
<feature type="active site" description="Proton acceptor" evidence="1">
    <location>
        <position position="294"/>
    </location>
</feature>
<feature type="binding site" description="in homodimeric partner" evidence="1">
    <location>
        <position position="123"/>
    </location>
    <ligand>
        <name>substrate</name>
    </ligand>
</feature>
<feature type="binding site" evidence="1">
    <location>
        <position position="173"/>
    </location>
    <ligand>
        <name>substrate</name>
    </ligand>
</feature>
<feature type="binding site" evidence="1">
    <location>
        <position position="177"/>
    </location>
    <ligand>
        <name>substrate</name>
    </ligand>
</feature>
<feature type="binding site" description="via carbamate group" evidence="1">
    <location>
        <position position="201"/>
    </location>
    <ligand>
        <name>Mg(2+)</name>
        <dbReference type="ChEBI" id="CHEBI:18420"/>
    </ligand>
</feature>
<feature type="binding site" evidence="1">
    <location>
        <position position="203"/>
    </location>
    <ligand>
        <name>Mg(2+)</name>
        <dbReference type="ChEBI" id="CHEBI:18420"/>
    </ligand>
</feature>
<feature type="binding site" evidence="1">
    <location>
        <position position="204"/>
    </location>
    <ligand>
        <name>Mg(2+)</name>
        <dbReference type="ChEBI" id="CHEBI:18420"/>
    </ligand>
</feature>
<feature type="binding site" evidence="1">
    <location>
        <position position="295"/>
    </location>
    <ligand>
        <name>substrate</name>
    </ligand>
</feature>
<feature type="binding site" evidence="1">
    <location>
        <position position="327"/>
    </location>
    <ligand>
        <name>substrate</name>
    </ligand>
</feature>
<feature type="binding site" evidence="1">
    <location>
        <position position="379"/>
    </location>
    <ligand>
        <name>substrate</name>
    </ligand>
</feature>
<feature type="site" description="Transition state stabilizer" evidence="1">
    <location>
        <position position="334"/>
    </location>
</feature>
<feature type="modified residue" description="N-acetylproline" evidence="1">
    <location>
        <position position="3"/>
    </location>
</feature>
<feature type="modified residue" description="N6,N6,N6-trimethyllysine" evidence="1">
    <location>
        <position position="14"/>
    </location>
</feature>
<feature type="modified residue" description="N6-carboxylysine" evidence="1">
    <location>
        <position position="201"/>
    </location>
</feature>
<comment type="function">
    <text evidence="1">RuBisCO catalyzes two reactions: the carboxylation of D-ribulose 1,5-bisphosphate, the primary event in carbon dioxide fixation, as well as the oxidative fragmentation of the pentose substrate in the photorespiration process. Both reactions occur simultaneously and in competition at the same active site.</text>
</comment>
<comment type="catalytic activity">
    <reaction evidence="1">
        <text>2 (2R)-3-phosphoglycerate + 2 H(+) = D-ribulose 1,5-bisphosphate + CO2 + H2O</text>
        <dbReference type="Rhea" id="RHEA:23124"/>
        <dbReference type="ChEBI" id="CHEBI:15377"/>
        <dbReference type="ChEBI" id="CHEBI:15378"/>
        <dbReference type="ChEBI" id="CHEBI:16526"/>
        <dbReference type="ChEBI" id="CHEBI:57870"/>
        <dbReference type="ChEBI" id="CHEBI:58272"/>
        <dbReference type="EC" id="4.1.1.39"/>
    </reaction>
</comment>
<comment type="catalytic activity">
    <reaction evidence="1">
        <text>D-ribulose 1,5-bisphosphate + O2 = 2-phosphoglycolate + (2R)-3-phosphoglycerate + 2 H(+)</text>
        <dbReference type="Rhea" id="RHEA:36631"/>
        <dbReference type="ChEBI" id="CHEBI:15378"/>
        <dbReference type="ChEBI" id="CHEBI:15379"/>
        <dbReference type="ChEBI" id="CHEBI:57870"/>
        <dbReference type="ChEBI" id="CHEBI:58033"/>
        <dbReference type="ChEBI" id="CHEBI:58272"/>
    </reaction>
</comment>
<comment type="cofactor">
    <cofactor evidence="1">
        <name>Mg(2+)</name>
        <dbReference type="ChEBI" id="CHEBI:18420"/>
    </cofactor>
    <text evidence="1">Binds 1 Mg(2+) ion per subunit.</text>
</comment>
<comment type="subunit">
    <text evidence="1">Heterohexadecamer of 8 large chains and 8 small chains.</text>
</comment>
<comment type="subcellular location">
    <subcellularLocation>
        <location>Plastid</location>
        <location>Chloroplast</location>
    </subcellularLocation>
</comment>
<comment type="miscellaneous">
    <text evidence="1">The basic functional RuBisCO is composed of a large chain homodimer in a 'head-to-tail' conformation. In form I RuBisCO this homodimer is arranged in a barrel-like tetramer with the small subunits forming a tetrameric 'cap' on each end of the 'barrel'.</text>
</comment>
<comment type="similarity">
    <text evidence="1">Belongs to the RuBisCO large chain family. Type I subfamily.</text>
</comment>
<name>RBL_CHLMO</name>
<dbReference type="EC" id="4.1.1.39" evidence="1"/>
<dbReference type="EMBL" id="M15842">
    <property type="protein sequence ID" value="AAA84152.1"/>
    <property type="molecule type" value="Genomic_DNA"/>
</dbReference>
<dbReference type="PIR" id="A29497">
    <property type="entry name" value="RKKMLM"/>
</dbReference>
<dbReference type="SMR" id="P08211"/>
<dbReference type="GO" id="GO:0009507">
    <property type="term" value="C:chloroplast"/>
    <property type="evidence" value="ECO:0007669"/>
    <property type="project" value="UniProtKB-SubCell"/>
</dbReference>
<dbReference type="GO" id="GO:0000287">
    <property type="term" value="F:magnesium ion binding"/>
    <property type="evidence" value="ECO:0007669"/>
    <property type="project" value="UniProtKB-UniRule"/>
</dbReference>
<dbReference type="GO" id="GO:0004497">
    <property type="term" value="F:monooxygenase activity"/>
    <property type="evidence" value="ECO:0007669"/>
    <property type="project" value="UniProtKB-KW"/>
</dbReference>
<dbReference type="GO" id="GO:0016984">
    <property type="term" value="F:ribulose-bisphosphate carboxylase activity"/>
    <property type="evidence" value="ECO:0007669"/>
    <property type="project" value="UniProtKB-UniRule"/>
</dbReference>
<dbReference type="GO" id="GO:0009853">
    <property type="term" value="P:photorespiration"/>
    <property type="evidence" value="ECO:0007669"/>
    <property type="project" value="UniProtKB-KW"/>
</dbReference>
<dbReference type="GO" id="GO:0019253">
    <property type="term" value="P:reductive pentose-phosphate cycle"/>
    <property type="evidence" value="ECO:0007669"/>
    <property type="project" value="UniProtKB-UniRule"/>
</dbReference>
<dbReference type="CDD" id="cd08212">
    <property type="entry name" value="RuBisCO_large_I"/>
    <property type="match status" value="1"/>
</dbReference>
<dbReference type="FunFam" id="3.30.70.150:FF:000001">
    <property type="entry name" value="Ribulose bisphosphate carboxylase large chain"/>
    <property type="match status" value="1"/>
</dbReference>
<dbReference type="Gene3D" id="3.20.20.110">
    <property type="entry name" value="Ribulose bisphosphate carboxylase, large subunit, C-terminal domain"/>
    <property type="match status" value="1"/>
</dbReference>
<dbReference type="Gene3D" id="3.30.70.150">
    <property type="entry name" value="RuBisCO large subunit, N-terminal domain"/>
    <property type="match status" value="1"/>
</dbReference>
<dbReference type="HAMAP" id="MF_01338">
    <property type="entry name" value="RuBisCO_L_type1"/>
    <property type="match status" value="1"/>
</dbReference>
<dbReference type="InterPro" id="IPR033966">
    <property type="entry name" value="RuBisCO"/>
</dbReference>
<dbReference type="InterPro" id="IPR020878">
    <property type="entry name" value="RuBisCo_large_chain_AS"/>
</dbReference>
<dbReference type="InterPro" id="IPR000685">
    <property type="entry name" value="RuBisCO_lsu_C"/>
</dbReference>
<dbReference type="InterPro" id="IPR036376">
    <property type="entry name" value="RuBisCO_lsu_C_sf"/>
</dbReference>
<dbReference type="InterPro" id="IPR017443">
    <property type="entry name" value="RuBisCO_lsu_fd_N"/>
</dbReference>
<dbReference type="InterPro" id="IPR036422">
    <property type="entry name" value="RuBisCO_lsu_N_sf"/>
</dbReference>
<dbReference type="InterPro" id="IPR020888">
    <property type="entry name" value="RuBisCO_lsuI"/>
</dbReference>
<dbReference type="NCBIfam" id="NF003252">
    <property type="entry name" value="PRK04208.1"/>
    <property type="match status" value="1"/>
</dbReference>
<dbReference type="PANTHER" id="PTHR42704">
    <property type="entry name" value="RIBULOSE BISPHOSPHATE CARBOXYLASE"/>
    <property type="match status" value="1"/>
</dbReference>
<dbReference type="PANTHER" id="PTHR42704:SF17">
    <property type="entry name" value="RIBULOSE BISPHOSPHATE CARBOXYLASE LARGE CHAIN"/>
    <property type="match status" value="1"/>
</dbReference>
<dbReference type="Pfam" id="PF00016">
    <property type="entry name" value="RuBisCO_large"/>
    <property type="match status" value="1"/>
</dbReference>
<dbReference type="Pfam" id="PF02788">
    <property type="entry name" value="RuBisCO_large_N"/>
    <property type="match status" value="1"/>
</dbReference>
<dbReference type="SFLD" id="SFLDG01052">
    <property type="entry name" value="RuBisCO"/>
    <property type="match status" value="1"/>
</dbReference>
<dbReference type="SFLD" id="SFLDS00014">
    <property type="entry name" value="RuBisCO"/>
    <property type="match status" value="1"/>
</dbReference>
<dbReference type="SFLD" id="SFLDG00301">
    <property type="entry name" value="RuBisCO-like_proteins"/>
    <property type="match status" value="1"/>
</dbReference>
<dbReference type="SUPFAM" id="SSF51649">
    <property type="entry name" value="RuBisCo, C-terminal domain"/>
    <property type="match status" value="1"/>
</dbReference>
<dbReference type="SUPFAM" id="SSF54966">
    <property type="entry name" value="RuBisCO, large subunit, small (N-terminal) domain"/>
    <property type="match status" value="1"/>
</dbReference>
<dbReference type="PROSITE" id="PS00157">
    <property type="entry name" value="RUBISCO_LARGE"/>
    <property type="match status" value="1"/>
</dbReference>
<keyword id="KW-0007">Acetylation</keyword>
<keyword id="KW-0113">Calvin cycle</keyword>
<keyword id="KW-0120">Carbon dioxide fixation</keyword>
<keyword id="KW-0150">Chloroplast</keyword>
<keyword id="KW-0456">Lyase</keyword>
<keyword id="KW-0460">Magnesium</keyword>
<keyword id="KW-0479">Metal-binding</keyword>
<keyword id="KW-0488">Methylation</keyword>
<keyword id="KW-0503">Monooxygenase</keyword>
<keyword id="KW-0560">Oxidoreductase</keyword>
<keyword id="KW-0601">Photorespiration</keyword>
<keyword id="KW-0602">Photosynthesis</keyword>
<keyword id="KW-0934">Plastid</keyword>